<accession>Q29055</accession>
<keyword id="KW-0202">Cytokine</keyword>
<keyword id="KW-1015">Disulfide bond</keyword>
<keyword id="KW-0325">Glycoprotein</keyword>
<keyword id="KW-1185">Reference proteome</keyword>
<keyword id="KW-0964">Secreted</keyword>
<keyword id="KW-0732">Signal</keyword>
<feature type="signal peptide" evidence="4">
    <location>
        <begin position="1"/>
        <end position="18"/>
    </location>
</feature>
<feature type="chain" id="PRO_0000015370" description="Interleukin-10">
    <location>
        <begin position="19"/>
        <end position="175"/>
    </location>
</feature>
<feature type="glycosylation site" description="N-linked (GlcNAc...) asparagine" evidence="4">
    <location>
        <position position="130"/>
    </location>
</feature>
<feature type="disulfide bond" evidence="1">
    <location>
        <begin position="26"/>
        <end position="122"/>
    </location>
</feature>
<feature type="disulfide bond" evidence="1">
    <location>
        <begin position="76"/>
        <end position="128"/>
    </location>
</feature>
<protein>
    <recommendedName>
        <fullName>Interleukin-10</fullName>
        <shortName>IL-10</shortName>
    </recommendedName>
    <alternativeName>
        <fullName>Cytokine synthesis inhibitory factor</fullName>
        <shortName>CSIF</shortName>
    </alternativeName>
</protein>
<evidence type="ECO:0000250" key="1"/>
<evidence type="ECO:0000250" key="2">
    <source>
        <dbReference type="UniProtKB" id="P18893"/>
    </source>
</evidence>
<evidence type="ECO:0000250" key="3">
    <source>
        <dbReference type="UniProtKB" id="P22301"/>
    </source>
</evidence>
<evidence type="ECO:0000255" key="4"/>
<evidence type="ECO:0000305" key="5"/>
<name>IL10_PIG</name>
<organism>
    <name type="scientific">Sus scrofa</name>
    <name type="common">Pig</name>
    <dbReference type="NCBI Taxonomy" id="9823"/>
    <lineage>
        <taxon>Eukaryota</taxon>
        <taxon>Metazoa</taxon>
        <taxon>Chordata</taxon>
        <taxon>Craniata</taxon>
        <taxon>Vertebrata</taxon>
        <taxon>Euteleostomi</taxon>
        <taxon>Mammalia</taxon>
        <taxon>Eutheria</taxon>
        <taxon>Laurasiatheria</taxon>
        <taxon>Artiodactyla</taxon>
        <taxon>Suina</taxon>
        <taxon>Suidae</taxon>
        <taxon>Sus</taxon>
    </lineage>
</organism>
<sequence length="175" mass="19934">MPSSALLYCLIFLAGVAASIKSENSCIHFPTSLPHMLRELRAAFGPVKSFFQTKDQMGDLLLTGSLLEDFKGYLGCQALSEMIQFYLEDVMPKAESDGEDIKEHVNSLGEKLKTLRLRLRRCHQFLPCENKSKAVEEVKSAFSKLQERGVYKAMGEFDIFINYIEAYMTMKMRKN</sequence>
<comment type="function">
    <text evidence="2 3">Major immune regulatory cytokine that acts on many cells of the immune system where it has profound anti-inflammatory functions, limiting excessive tissue disruption caused by inflammation. Mechanistically, IL10 binds to its heterotetrameric receptor comprising IL10RA and IL10RB leading to JAK1 and STAT2-mediated phosphorylation of STAT3. In turn, STAT3 translocates to the nucleus where it drives expression of anti-inflammatory mediators. Targets antigen-presenting cells (APCs) such as macrophages and monocytes and inhibits their release of pro-inflammatory cytokines including granulocyte-macrophage colony-stimulating factor /GM-CSF, granulocyte colony-stimulating factor/G-CSF, IL-1 alpha, IL-1 beta, IL-6, IL-8 and TNF-alpha. Also interferes with antigen presentation by reducing the expression of MHC-class II and co-stimulatory molecules, thereby inhibiting their ability to induce T cell activation (By similarity). In addition, controls the inflammatory response of macrophages by reprogramming essential metabolic pathways including mTOR signaling (By similarity).</text>
</comment>
<comment type="subunit">
    <text evidence="3">Homodimer. Interacts with IL10RA and IL10RB.</text>
</comment>
<comment type="subcellular location">
    <subcellularLocation>
        <location evidence="3">Secreted</location>
    </subcellularLocation>
</comment>
<comment type="similarity">
    <text evidence="5">Belongs to the IL-10 family.</text>
</comment>
<dbReference type="EMBL" id="L20001">
    <property type="protein sequence ID" value="AAA74410.1"/>
    <property type="molecule type" value="mRNA"/>
</dbReference>
<dbReference type="PIR" id="I46591">
    <property type="entry name" value="I46591"/>
</dbReference>
<dbReference type="RefSeq" id="NP_999206.1">
    <property type="nucleotide sequence ID" value="NM_214041.1"/>
</dbReference>
<dbReference type="SMR" id="Q29055"/>
<dbReference type="FunCoup" id="Q29055">
    <property type="interactions" value="303"/>
</dbReference>
<dbReference type="STRING" id="9823.ENSSSCP00000016594"/>
<dbReference type="GlyCosmos" id="Q29055">
    <property type="glycosylation" value="1 site, No reported glycans"/>
</dbReference>
<dbReference type="GlyGen" id="Q29055">
    <property type="glycosylation" value="1 site"/>
</dbReference>
<dbReference type="PaxDb" id="9823-ENSSSCP00000016594"/>
<dbReference type="Ensembl" id="ENSSSCT00000017049.6">
    <property type="protein sequence ID" value="ENSSSCP00000016594.4"/>
    <property type="gene ID" value="ENSSSCG00000015652.6"/>
</dbReference>
<dbReference type="Ensembl" id="ENSSSCT00115032561">
    <property type="protein sequence ID" value="ENSSSCP00115030945"/>
    <property type="gene ID" value="ENSSSCG00115018375"/>
</dbReference>
<dbReference type="GeneID" id="397106"/>
<dbReference type="KEGG" id="ssc:397106"/>
<dbReference type="CTD" id="3586"/>
<dbReference type="VGNC" id="VGNC:108593">
    <property type="gene designation" value="IL10"/>
</dbReference>
<dbReference type="eggNOG" id="ENOG502S22U">
    <property type="taxonomic scope" value="Eukaryota"/>
</dbReference>
<dbReference type="GeneTree" id="ENSGT00950000183124"/>
<dbReference type="HOGENOM" id="CLU_127747_0_0_1"/>
<dbReference type="InParanoid" id="Q29055"/>
<dbReference type="OMA" id="CHRFFTC"/>
<dbReference type="OrthoDB" id="9931894at2759"/>
<dbReference type="TreeFam" id="TF333253"/>
<dbReference type="Reactome" id="R-SSC-6783783">
    <property type="pathway name" value="Interleukin-10 signaling"/>
</dbReference>
<dbReference type="Proteomes" id="UP000008227">
    <property type="component" value="Chromosome 9"/>
</dbReference>
<dbReference type="Proteomes" id="UP000314985">
    <property type="component" value="Unplaced"/>
</dbReference>
<dbReference type="Proteomes" id="UP000694570">
    <property type="component" value="Unplaced"/>
</dbReference>
<dbReference type="Proteomes" id="UP000694571">
    <property type="component" value="Unplaced"/>
</dbReference>
<dbReference type="Proteomes" id="UP000694720">
    <property type="component" value="Unplaced"/>
</dbReference>
<dbReference type="Proteomes" id="UP000694722">
    <property type="component" value="Unplaced"/>
</dbReference>
<dbReference type="Proteomes" id="UP000694723">
    <property type="component" value="Unplaced"/>
</dbReference>
<dbReference type="Proteomes" id="UP000694724">
    <property type="component" value="Unplaced"/>
</dbReference>
<dbReference type="Proteomes" id="UP000694725">
    <property type="component" value="Unplaced"/>
</dbReference>
<dbReference type="Proteomes" id="UP000694726">
    <property type="component" value="Unplaced"/>
</dbReference>
<dbReference type="Proteomes" id="UP000694727">
    <property type="component" value="Unplaced"/>
</dbReference>
<dbReference type="Proteomes" id="UP000694728">
    <property type="component" value="Unplaced"/>
</dbReference>
<dbReference type="GO" id="GO:0005615">
    <property type="term" value="C:extracellular space"/>
    <property type="evidence" value="ECO:0000318"/>
    <property type="project" value="GO_Central"/>
</dbReference>
<dbReference type="GO" id="GO:0005125">
    <property type="term" value="F:cytokine activity"/>
    <property type="evidence" value="ECO:0000318"/>
    <property type="project" value="GO_Central"/>
</dbReference>
<dbReference type="GO" id="GO:0046983">
    <property type="term" value="F:protein dimerization activity"/>
    <property type="evidence" value="ECO:0007669"/>
    <property type="project" value="Ensembl"/>
</dbReference>
<dbReference type="GO" id="GO:0060670">
    <property type="term" value="P:branching involved in labyrinthine layer morphogenesis"/>
    <property type="evidence" value="ECO:0007669"/>
    <property type="project" value="Ensembl"/>
</dbReference>
<dbReference type="GO" id="GO:0035729">
    <property type="term" value="P:cellular response to hepatocyte growth factor stimulus"/>
    <property type="evidence" value="ECO:0007669"/>
    <property type="project" value="Ensembl"/>
</dbReference>
<dbReference type="GO" id="GO:0071222">
    <property type="term" value="P:cellular response to lipopolysaccharide"/>
    <property type="evidence" value="ECO:0007669"/>
    <property type="project" value="Ensembl"/>
</dbReference>
<dbReference type="GO" id="GO:0002439">
    <property type="term" value="P:chronic inflammatory response to antigenic stimulus"/>
    <property type="evidence" value="ECO:0007669"/>
    <property type="project" value="Ensembl"/>
</dbReference>
<dbReference type="GO" id="GO:0042742">
    <property type="term" value="P:defense response to bacterium"/>
    <property type="evidence" value="ECO:0007669"/>
    <property type="project" value="Ensembl"/>
</dbReference>
<dbReference type="GO" id="GO:0042832">
    <property type="term" value="P:defense response to protozoan"/>
    <property type="evidence" value="ECO:0007669"/>
    <property type="project" value="Ensembl"/>
</dbReference>
<dbReference type="GO" id="GO:0006955">
    <property type="term" value="P:immune response"/>
    <property type="evidence" value="ECO:0000318"/>
    <property type="project" value="GO_Central"/>
</dbReference>
<dbReference type="GO" id="GO:0140105">
    <property type="term" value="P:interleukin-10-mediated signaling pathway"/>
    <property type="evidence" value="ECO:0000318"/>
    <property type="project" value="GO_Central"/>
</dbReference>
<dbReference type="GO" id="GO:0010507">
    <property type="term" value="P:negative regulation of autophagy"/>
    <property type="evidence" value="ECO:0007669"/>
    <property type="project" value="Ensembl"/>
</dbReference>
<dbReference type="GO" id="GO:0030889">
    <property type="term" value="P:negative regulation of B cell proliferation"/>
    <property type="evidence" value="ECO:0007669"/>
    <property type="project" value="Ensembl"/>
</dbReference>
<dbReference type="GO" id="GO:0002875">
    <property type="term" value="P:negative regulation of chronic inflammatory response to antigenic stimulus"/>
    <property type="evidence" value="ECO:0007669"/>
    <property type="project" value="Ensembl"/>
</dbReference>
<dbReference type="GO" id="GO:0002719">
    <property type="term" value="P:negative regulation of cytokine production involved in immune response"/>
    <property type="evidence" value="ECO:0007669"/>
    <property type="project" value="Ensembl"/>
</dbReference>
<dbReference type="GO" id="GO:2000352">
    <property type="term" value="P:negative regulation of endothelial cell apoptotic process"/>
    <property type="evidence" value="ECO:0007669"/>
    <property type="project" value="Ensembl"/>
</dbReference>
<dbReference type="GO" id="GO:0034115">
    <property type="term" value="P:negative regulation of heterotypic cell-cell adhesion"/>
    <property type="evidence" value="ECO:0007669"/>
    <property type="project" value="Ensembl"/>
</dbReference>
<dbReference type="GO" id="GO:0050728">
    <property type="term" value="P:negative regulation of inflammatory response"/>
    <property type="evidence" value="ECO:0000318"/>
    <property type="project" value="GO_Central"/>
</dbReference>
<dbReference type="GO" id="GO:0032695">
    <property type="term" value="P:negative regulation of interleukin-12 production"/>
    <property type="evidence" value="ECO:0007669"/>
    <property type="project" value="Ensembl"/>
</dbReference>
<dbReference type="GO" id="GO:0032715">
    <property type="term" value="P:negative regulation of interleukin-6 production"/>
    <property type="evidence" value="ECO:0007669"/>
    <property type="project" value="Ensembl"/>
</dbReference>
<dbReference type="GO" id="GO:0051045">
    <property type="term" value="P:negative regulation of membrane protein ectodomain proteolysis"/>
    <property type="evidence" value="ECO:0007669"/>
    <property type="project" value="Ensembl"/>
</dbReference>
<dbReference type="GO" id="GO:0045347">
    <property type="term" value="P:negative regulation of MHC class II biosynthetic process"/>
    <property type="evidence" value="ECO:0007669"/>
    <property type="project" value="Ensembl"/>
</dbReference>
<dbReference type="GO" id="GO:0030886">
    <property type="term" value="P:negative regulation of myeloid dendritic cell activation"/>
    <property type="evidence" value="ECO:0007669"/>
    <property type="project" value="Ensembl"/>
</dbReference>
<dbReference type="GO" id="GO:1903377">
    <property type="term" value="P:negative regulation of oxidative stress-induced neuron intrinsic apoptotic signaling pathway"/>
    <property type="evidence" value="ECO:0007669"/>
    <property type="project" value="Ensembl"/>
</dbReference>
<dbReference type="GO" id="GO:0032720">
    <property type="term" value="P:negative regulation of tumor necrosis factor production"/>
    <property type="evidence" value="ECO:0007669"/>
    <property type="project" value="Ensembl"/>
</dbReference>
<dbReference type="GO" id="GO:0032689">
    <property type="term" value="P:negative regulation of type II interferon production"/>
    <property type="evidence" value="ECO:0007669"/>
    <property type="project" value="Ensembl"/>
</dbReference>
<dbReference type="GO" id="GO:1904706">
    <property type="term" value="P:negative regulation of vascular associated smooth muscle cell proliferation"/>
    <property type="evidence" value="ECO:0007669"/>
    <property type="project" value="Ensembl"/>
</dbReference>
<dbReference type="GO" id="GO:0002904">
    <property type="term" value="P:positive regulation of B cell apoptotic process"/>
    <property type="evidence" value="ECO:0007669"/>
    <property type="project" value="Ensembl"/>
</dbReference>
<dbReference type="GO" id="GO:0045787">
    <property type="term" value="P:positive regulation of cell cycle"/>
    <property type="evidence" value="ECO:0007669"/>
    <property type="project" value="Ensembl"/>
</dbReference>
<dbReference type="GO" id="GO:0001819">
    <property type="term" value="P:positive regulation of cytokine production"/>
    <property type="evidence" value="ECO:0007669"/>
    <property type="project" value="Ensembl"/>
</dbReference>
<dbReference type="GO" id="GO:0001938">
    <property type="term" value="P:positive regulation of endothelial cell proliferation"/>
    <property type="evidence" value="ECO:0007669"/>
    <property type="project" value="Ensembl"/>
</dbReference>
<dbReference type="GO" id="GO:0002639">
    <property type="term" value="P:positive regulation of immunoglobulin production"/>
    <property type="evidence" value="ECO:0007669"/>
    <property type="project" value="Ensembl"/>
</dbReference>
<dbReference type="GO" id="GO:0045348">
    <property type="term" value="P:positive regulation of MHC class II biosynthetic process"/>
    <property type="evidence" value="ECO:0007669"/>
    <property type="project" value="Ensembl"/>
</dbReference>
<dbReference type="GO" id="GO:1902895">
    <property type="term" value="P:positive regulation of miRNA transcription"/>
    <property type="evidence" value="ECO:0007669"/>
    <property type="project" value="Ensembl"/>
</dbReference>
<dbReference type="GO" id="GO:1900100">
    <property type="term" value="P:positive regulation of plasma cell differentiation"/>
    <property type="evidence" value="ECO:0007669"/>
    <property type="project" value="Ensembl"/>
</dbReference>
<dbReference type="GO" id="GO:0046427">
    <property type="term" value="P:positive regulation of receptor signaling pathway via JAK-STAT"/>
    <property type="evidence" value="ECO:0000318"/>
    <property type="project" value="GO_Central"/>
</dbReference>
<dbReference type="GO" id="GO:1903672">
    <property type="term" value="P:positive regulation of sprouting angiogenesis"/>
    <property type="evidence" value="ECO:0007669"/>
    <property type="project" value="Ensembl"/>
</dbReference>
<dbReference type="GO" id="GO:0045944">
    <property type="term" value="P:positive regulation of transcription by RNA polymerase II"/>
    <property type="evidence" value="ECO:0007669"/>
    <property type="project" value="Ensembl"/>
</dbReference>
<dbReference type="GO" id="GO:1903034">
    <property type="term" value="P:regulation of response to wounding"/>
    <property type="evidence" value="ECO:0007669"/>
    <property type="project" value="Ensembl"/>
</dbReference>
<dbReference type="GO" id="GO:0051384">
    <property type="term" value="P:response to glucocorticoid"/>
    <property type="evidence" value="ECO:0007669"/>
    <property type="project" value="Ensembl"/>
</dbReference>
<dbReference type="FunFam" id="1.20.1250.10:FF:000011">
    <property type="entry name" value="Interleukin-10"/>
    <property type="match status" value="1"/>
</dbReference>
<dbReference type="Gene3D" id="1.20.1250.10">
    <property type="match status" value="1"/>
</dbReference>
<dbReference type="InterPro" id="IPR009079">
    <property type="entry name" value="4_helix_cytokine-like_core"/>
</dbReference>
<dbReference type="InterPro" id="IPR000098">
    <property type="entry name" value="IL-10"/>
</dbReference>
<dbReference type="InterPro" id="IPR020443">
    <property type="entry name" value="IL-10/19/20/24/26"/>
</dbReference>
<dbReference type="InterPro" id="IPR020423">
    <property type="entry name" value="IL-10_CS"/>
</dbReference>
<dbReference type="PANTHER" id="PTHR48482:SF5">
    <property type="entry name" value="INTERLEUKIN-10"/>
    <property type="match status" value="1"/>
</dbReference>
<dbReference type="PANTHER" id="PTHR48482">
    <property type="entry name" value="INTERLEUKIN-19-RELATED"/>
    <property type="match status" value="1"/>
</dbReference>
<dbReference type="Pfam" id="PF00726">
    <property type="entry name" value="IL10"/>
    <property type="match status" value="1"/>
</dbReference>
<dbReference type="PRINTS" id="PR01294">
    <property type="entry name" value="INTRLEUKIN10"/>
</dbReference>
<dbReference type="SMART" id="SM00188">
    <property type="entry name" value="IL10"/>
    <property type="match status" value="1"/>
</dbReference>
<dbReference type="SUPFAM" id="SSF47266">
    <property type="entry name" value="4-helical cytokines"/>
    <property type="match status" value="1"/>
</dbReference>
<dbReference type="PROSITE" id="PS00520">
    <property type="entry name" value="INTERLEUKIN_10"/>
    <property type="match status" value="1"/>
</dbReference>
<reference key="1">
    <citation type="journal article" date="1995" name="Proc. Natl. Acad. Sci. U.S.A.">
        <title>Molecular identification of porcine interleukin 10: regulation of expression in a kidney allograft model.</title>
        <authorList>
            <person name="Blancho G."/>
            <person name="Gianello P."/>
            <person name="Germana S."/>
            <person name="Baetscher M."/>
            <person name="Sachs D.H."/>
            <person name="Leguern C."/>
        </authorList>
    </citation>
    <scope>NUCLEOTIDE SEQUENCE [MRNA]</scope>
    <source>
        <tissue>Spleen</tissue>
    </source>
</reference>
<gene>
    <name type="primary">IL10</name>
</gene>
<proteinExistence type="evidence at transcript level"/>